<name>RLME_CUPPJ</name>
<evidence type="ECO:0000255" key="1">
    <source>
        <dbReference type="HAMAP-Rule" id="MF_01547"/>
    </source>
</evidence>
<gene>
    <name evidence="1" type="primary">rlmE</name>
    <name evidence="1" type="synonym">ftsJ</name>
    <name evidence="1" type="synonym">rrmJ</name>
    <name type="ordered locus">Reut_A2171</name>
</gene>
<dbReference type="EC" id="2.1.1.166" evidence="1"/>
<dbReference type="EMBL" id="CP000090">
    <property type="protein sequence ID" value="AAZ61535.1"/>
    <property type="molecule type" value="Genomic_DNA"/>
</dbReference>
<dbReference type="SMR" id="Q46Z98"/>
<dbReference type="STRING" id="264198.Reut_A2171"/>
<dbReference type="KEGG" id="reu:Reut_A2171"/>
<dbReference type="eggNOG" id="COG0293">
    <property type="taxonomic scope" value="Bacteria"/>
</dbReference>
<dbReference type="HOGENOM" id="CLU_009422_4_1_4"/>
<dbReference type="OrthoDB" id="9790080at2"/>
<dbReference type="GO" id="GO:0005737">
    <property type="term" value="C:cytoplasm"/>
    <property type="evidence" value="ECO:0007669"/>
    <property type="project" value="UniProtKB-SubCell"/>
</dbReference>
<dbReference type="GO" id="GO:0008650">
    <property type="term" value="F:rRNA (uridine-2'-O-)-methyltransferase activity"/>
    <property type="evidence" value="ECO:0007669"/>
    <property type="project" value="UniProtKB-UniRule"/>
</dbReference>
<dbReference type="FunFam" id="3.40.50.150:FF:000005">
    <property type="entry name" value="Ribosomal RNA large subunit methyltransferase E"/>
    <property type="match status" value="1"/>
</dbReference>
<dbReference type="Gene3D" id="3.40.50.150">
    <property type="entry name" value="Vaccinia Virus protein VP39"/>
    <property type="match status" value="1"/>
</dbReference>
<dbReference type="HAMAP" id="MF_01547">
    <property type="entry name" value="RNA_methyltr_E"/>
    <property type="match status" value="1"/>
</dbReference>
<dbReference type="InterPro" id="IPR050082">
    <property type="entry name" value="RNA_methyltr_RlmE"/>
</dbReference>
<dbReference type="InterPro" id="IPR002877">
    <property type="entry name" value="RNA_MeTrfase_FtsJ_dom"/>
</dbReference>
<dbReference type="InterPro" id="IPR015507">
    <property type="entry name" value="rRNA-MeTfrase_E"/>
</dbReference>
<dbReference type="InterPro" id="IPR029063">
    <property type="entry name" value="SAM-dependent_MTases_sf"/>
</dbReference>
<dbReference type="PANTHER" id="PTHR10920">
    <property type="entry name" value="RIBOSOMAL RNA METHYLTRANSFERASE"/>
    <property type="match status" value="1"/>
</dbReference>
<dbReference type="PANTHER" id="PTHR10920:SF18">
    <property type="entry name" value="RRNA METHYLTRANSFERASE 2, MITOCHONDRIAL"/>
    <property type="match status" value="1"/>
</dbReference>
<dbReference type="Pfam" id="PF01728">
    <property type="entry name" value="FtsJ"/>
    <property type="match status" value="1"/>
</dbReference>
<dbReference type="PIRSF" id="PIRSF005461">
    <property type="entry name" value="23S_rRNA_mtase"/>
    <property type="match status" value="1"/>
</dbReference>
<dbReference type="SUPFAM" id="SSF53335">
    <property type="entry name" value="S-adenosyl-L-methionine-dependent methyltransferases"/>
    <property type="match status" value="1"/>
</dbReference>
<organism>
    <name type="scientific">Cupriavidus pinatubonensis (strain JMP 134 / LMG 1197)</name>
    <name type="common">Cupriavidus necator (strain JMP 134)</name>
    <dbReference type="NCBI Taxonomy" id="264198"/>
    <lineage>
        <taxon>Bacteria</taxon>
        <taxon>Pseudomonadati</taxon>
        <taxon>Pseudomonadota</taxon>
        <taxon>Betaproteobacteria</taxon>
        <taxon>Burkholderiales</taxon>
        <taxon>Burkholderiaceae</taxon>
        <taxon>Cupriavidus</taxon>
    </lineage>
</organism>
<reference key="1">
    <citation type="journal article" date="2010" name="PLoS ONE">
        <title>The complete multipartite genome sequence of Cupriavidus necator JMP134, a versatile pollutant degrader.</title>
        <authorList>
            <person name="Lykidis A."/>
            <person name="Perez-Pantoja D."/>
            <person name="Ledger T."/>
            <person name="Mavromatis K."/>
            <person name="Anderson I.J."/>
            <person name="Ivanova N.N."/>
            <person name="Hooper S.D."/>
            <person name="Lapidus A."/>
            <person name="Lucas S."/>
            <person name="Gonzalez B."/>
            <person name="Kyrpides N.C."/>
        </authorList>
    </citation>
    <scope>NUCLEOTIDE SEQUENCE [LARGE SCALE GENOMIC DNA]</scope>
    <source>
        <strain>JMP134 / LMG 1197</strain>
    </source>
</reference>
<protein>
    <recommendedName>
        <fullName evidence="1">Ribosomal RNA large subunit methyltransferase E</fullName>
        <ecNumber evidence="1">2.1.1.166</ecNumber>
    </recommendedName>
    <alternativeName>
        <fullName evidence="1">23S rRNA Um2552 methyltransferase</fullName>
    </alternativeName>
    <alternativeName>
        <fullName evidence="1">rRNA (uridine-2'-O-)-methyltransferase</fullName>
    </alternativeName>
</protein>
<accession>Q46Z98</accession>
<keyword id="KW-0963">Cytoplasm</keyword>
<keyword id="KW-0489">Methyltransferase</keyword>
<keyword id="KW-0698">rRNA processing</keyword>
<keyword id="KW-0949">S-adenosyl-L-methionine</keyword>
<keyword id="KW-0808">Transferase</keyword>
<comment type="function">
    <text evidence="1">Specifically methylates the uridine in position 2552 of 23S rRNA at the 2'-O position of the ribose in the fully assembled 50S ribosomal subunit.</text>
</comment>
<comment type="catalytic activity">
    <reaction evidence="1">
        <text>uridine(2552) in 23S rRNA + S-adenosyl-L-methionine = 2'-O-methyluridine(2552) in 23S rRNA + S-adenosyl-L-homocysteine + H(+)</text>
        <dbReference type="Rhea" id="RHEA:42720"/>
        <dbReference type="Rhea" id="RHEA-COMP:10202"/>
        <dbReference type="Rhea" id="RHEA-COMP:10203"/>
        <dbReference type="ChEBI" id="CHEBI:15378"/>
        <dbReference type="ChEBI" id="CHEBI:57856"/>
        <dbReference type="ChEBI" id="CHEBI:59789"/>
        <dbReference type="ChEBI" id="CHEBI:65315"/>
        <dbReference type="ChEBI" id="CHEBI:74478"/>
        <dbReference type="EC" id="2.1.1.166"/>
    </reaction>
</comment>
<comment type="subcellular location">
    <subcellularLocation>
        <location evidence="1">Cytoplasm</location>
    </subcellularLocation>
</comment>
<comment type="similarity">
    <text evidence="1">Belongs to the class I-like SAM-binding methyltransferase superfamily. RNA methyltransferase RlmE family.</text>
</comment>
<proteinExistence type="inferred from homology"/>
<feature type="chain" id="PRO_0000155527" description="Ribosomal RNA large subunit methyltransferase E">
    <location>
        <begin position="1"/>
        <end position="225"/>
    </location>
</feature>
<feature type="active site" description="Proton acceptor" evidence="1">
    <location>
        <position position="178"/>
    </location>
</feature>
<feature type="binding site" evidence="1">
    <location>
        <position position="64"/>
    </location>
    <ligand>
        <name>S-adenosyl-L-methionine</name>
        <dbReference type="ChEBI" id="CHEBI:59789"/>
    </ligand>
</feature>
<feature type="binding site" evidence="1">
    <location>
        <position position="66"/>
    </location>
    <ligand>
        <name>S-adenosyl-L-methionine</name>
        <dbReference type="ChEBI" id="CHEBI:59789"/>
    </ligand>
</feature>
<feature type="binding site" evidence="1">
    <location>
        <position position="93"/>
    </location>
    <ligand>
        <name>S-adenosyl-L-methionine</name>
        <dbReference type="ChEBI" id="CHEBI:59789"/>
    </ligand>
</feature>
<feature type="binding site" evidence="1">
    <location>
        <position position="109"/>
    </location>
    <ligand>
        <name>S-adenosyl-L-methionine</name>
        <dbReference type="ChEBI" id="CHEBI:59789"/>
    </ligand>
</feature>
<feature type="binding site" evidence="1">
    <location>
        <position position="138"/>
    </location>
    <ligand>
        <name>S-adenosyl-L-methionine</name>
        <dbReference type="ChEBI" id="CHEBI:59789"/>
    </ligand>
</feature>
<sequence length="225" mass="24782">MAKGKSKNKFNQSWLHDHINDPYVKMAQREGYRARAAYKLKEIDEQDKLIQPGQVIVDLGAAPGSWSQYARNKLAASPRATGGKPDGAVVAIDILPMEPVADVTFIQGDFREEDVFRQLEEVVMAASGGAKIDLVLSDMAPNLSGVASADSARIEYLCDLALDFAQTHLKPDGALLVKCFHGSGYSQIVEKFKRQFKVVAPRKPKASRDKSSETFILGRYLKVVN</sequence>